<comment type="function">
    <text evidence="1">This protein binds to the 23S rRNA, and is important in its secondary structure. It is located near the subunit interface in the base of the L7/L12 stalk, and near the tRNA binding site of the peptidyltransferase center.</text>
</comment>
<comment type="subunit">
    <text evidence="1">Part of the 50S ribosomal subunit.</text>
</comment>
<comment type="similarity">
    <text evidence="1">Belongs to the universal ribosomal protein uL6 family.</text>
</comment>
<sequence>MSRIANKPIVIPNGVEVKVENNVFKVKGPKGELSQEFLPYIKIEVNENEIYVKPNLEFMKRKSDLKKMKMFTGTYWRLFNNMIIGVTQGFRKELEIIGIGYRAQLQGKKLVMNLGYAHPVEMEIPSDVAVEVPSPNRIVVSGIDKQRVGQVAADIRRWREPNVYSGKGIRYVGEVVRLKEGKKA</sequence>
<feature type="chain" id="PRO_1000055325" description="Large ribosomal subunit protein uL6">
    <location>
        <begin position="1"/>
        <end position="184"/>
    </location>
</feature>
<dbReference type="EMBL" id="CP000716">
    <property type="protein sequence ID" value="ABR30829.1"/>
    <property type="molecule type" value="Genomic_DNA"/>
</dbReference>
<dbReference type="RefSeq" id="WP_012057190.1">
    <property type="nucleotide sequence ID" value="NC_009616.1"/>
</dbReference>
<dbReference type="SMR" id="A6LLM8"/>
<dbReference type="STRING" id="391009.Tmel_0968"/>
<dbReference type="KEGG" id="tme:Tmel_0968"/>
<dbReference type="eggNOG" id="COG0097">
    <property type="taxonomic scope" value="Bacteria"/>
</dbReference>
<dbReference type="HOGENOM" id="CLU_065464_1_2_0"/>
<dbReference type="OrthoDB" id="9805007at2"/>
<dbReference type="Proteomes" id="UP000001110">
    <property type="component" value="Chromosome"/>
</dbReference>
<dbReference type="GO" id="GO:0022625">
    <property type="term" value="C:cytosolic large ribosomal subunit"/>
    <property type="evidence" value="ECO:0007669"/>
    <property type="project" value="TreeGrafter"/>
</dbReference>
<dbReference type="GO" id="GO:0019843">
    <property type="term" value="F:rRNA binding"/>
    <property type="evidence" value="ECO:0007669"/>
    <property type="project" value="UniProtKB-UniRule"/>
</dbReference>
<dbReference type="GO" id="GO:0003735">
    <property type="term" value="F:structural constituent of ribosome"/>
    <property type="evidence" value="ECO:0007669"/>
    <property type="project" value="InterPro"/>
</dbReference>
<dbReference type="GO" id="GO:0002181">
    <property type="term" value="P:cytoplasmic translation"/>
    <property type="evidence" value="ECO:0007669"/>
    <property type="project" value="TreeGrafter"/>
</dbReference>
<dbReference type="FunFam" id="3.90.930.12:FF:000001">
    <property type="entry name" value="50S ribosomal protein L6"/>
    <property type="match status" value="1"/>
</dbReference>
<dbReference type="FunFam" id="3.90.930.12:FF:000002">
    <property type="entry name" value="50S ribosomal protein L6"/>
    <property type="match status" value="1"/>
</dbReference>
<dbReference type="Gene3D" id="3.90.930.12">
    <property type="entry name" value="Ribosomal protein L6, alpha-beta domain"/>
    <property type="match status" value="2"/>
</dbReference>
<dbReference type="HAMAP" id="MF_01365_B">
    <property type="entry name" value="Ribosomal_uL6_B"/>
    <property type="match status" value="1"/>
</dbReference>
<dbReference type="InterPro" id="IPR000702">
    <property type="entry name" value="Ribosomal_uL6-like"/>
</dbReference>
<dbReference type="InterPro" id="IPR036789">
    <property type="entry name" value="Ribosomal_uL6-like_a/b-dom_sf"/>
</dbReference>
<dbReference type="InterPro" id="IPR020040">
    <property type="entry name" value="Ribosomal_uL6_a/b-dom"/>
</dbReference>
<dbReference type="InterPro" id="IPR019906">
    <property type="entry name" value="Ribosomal_uL6_bac-type"/>
</dbReference>
<dbReference type="NCBIfam" id="TIGR03654">
    <property type="entry name" value="L6_bact"/>
    <property type="match status" value="1"/>
</dbReference>
<dbReference type="PANTHER" id="PTHR11655">
    <property type="entry name" value="60S/50S RIBOSOMAL PROTEIN L6/L9"/>
    <property type="match status" value="1"/>
</dbReference>
<dbReference type="PANTHER" id="PTHR11655:SF14">
    <property type="entry name" value="LARGE RIBOSOMAL SUBUNIT PROTEIN UL6M"/>
    <property type="match status" value="1"/>
</dbReference>
<dbReference type="Pfam" id="PF00347">
    <property type="entry name" value="Ribosomal_L6"/>
    <property type="match status" value="2"/>
</dbReference>
<dbReference type="PIRSF" id="PIRSF002162">
    <property type="entry name" value="Ribosomal_L6"/>
    <property type="match status" value="1"/>
</dbReference>
<dbReference type="PRINTS" id="PR00059">
    <property type="entry name" value="RIBOSOMALL6"/>
</dbReference>
<dbReference type="SUPFAM" id="SSF56053">
    <property type="entry name" value="Ribosomal protein L6"/>
    <property type="match status" value="2"/>
</dbReference>
<protein>
    <recommendedName>
        <fullName evidence="1">Large ribosomal subunit protein uL6</fullName>
    </recommendedName>
    <alternativeName>
        <fullName evidence="2">50S ribosomal protein L6</fullName>
    </alternativeName>
</protein>
<gene>
    <name evidence="1" type="primary">rplF</name>
    <name type="ordered locus">Tmel_0968</name>
</gene>
<keyword id="KW-0687">Ribonucleoprotein</keyword>
<keyword id="KW-0689">Ribosomal protein</keyword>
<keyword id="KW-0694">RNA-binding</keyword>
<keyword id="KW-0699">rRNA-binding</keyword>
<name>RL6_THEM4</name>
<evidence type="ECO:0000255" key="1">
    <source>
        <dbReference type="HAMAP-Rule" id="MF_01365"/>
    </source>
</evidence>
<evidence type="ECO:0000305" key="2"/>
<proteinExistence type="inferred from homology"/>
<reference key="1">
    <citation type="submission" date="2007-05" db="EMBL/GenBank/DDBJ databases">
        <title>Complete sequence of Thermosipho melanesiensis BI429.</title>
        <authorList>
            <consortium name="US DOE Joint Genome Institute"/>
            <person name="Copeland A."/>
            <person name="Lucas S."/>
            <person name="Lapidus A."/>
            <person name="Barry K."/>
            <person name="Glavina del Rio T."/>
            <person name="Dalin E."/>
            <person name="Tice H."/>
            <person name="Pitluck S."/>
            <person name="Chertkov O."/>
            <person name="Brettin T."/>
            <person name="Bruce D."/>
            <person name="Detter J.C."/>
            <person name="Han C."/>
            <person name="Schmutz J."/>
            <person name="Larimer F."/>
            <person name="Land M."/>
            <person name="Hauser L."/>
            <person name="Kyrpides N."/>
            <person name="Mikhailova N."/>
            <person name="Nelson K."/>
            <person name="Gogarten J.P."/>
            <person name="Noll K."/>
            <person name="Richardson P."/>
        </authorList>
    </citation>
    <scope>NUCLEOTIDE SEQUENCE [LARGE SCALE GENOMIC DNA]</scope>
    <source>
        <strain>DSM 12029 / CIP 104789 / BI429</strain>
    </source>
</reference>
<organism>
    <name type="scientific">Thermosipho melanesiensis (strain DSM 12029 / CIP 104789 / BI429)</name>
    <dbReference type="NCBI Taxonomy" id="391009"/>
    <lineage>
        <taxon>Bacteria</taxon>
        <taxon>Thermotogati</taxon>
        <taxon>Thermotogota</taxon>
        <taxon>Thermotogae</taxon>
        <taxon>Thermotogales</taxon>
        <taxon>Fervidobacteriaceae</taxon>
        <taxon>Thermosipho</taxon>
    </lineage>
</organism>
<accession>A6LLM8</accession>